<organism>
    <name type="scientific">Chlorobium phaeobacteroides (strain BS1)</name>
    <dbReference type="NCBI Taxonomy" id="331678"/>
    <lineage>
        <taxon>Bacteria</taxon>
        <taxon>Pseudomonadati</taxon>
        <taxon>Chlorobiota</taxon>
        <taxon>Chlorobiia</taxon>
        <taxon>Chlorobiales</taxon>
        <taxon>Chlorobiaceae</taxon>
        <taxon>Chlorobium/Pelodictyon group</taxon>
        <taxon>Chlorobium</taxon>
    </lineage>
</organism>
<evidence type="ECO:0000255" key="1">
    <source>
        <dbReference type="HAMAP-Rule" id="MF_00693"/>
    </source>
</evidence>
<reference key="1">
    <citation type="submission" date="2008-06" db="EMBL/GenBank/DDBJ databases">
        <title>Complete sequence of Chlorobium phaeobacteroides BS1.</title>
        <authorList>
            <consortium name="US DOE Joint Genome Institute"/>
            <person name="Lucas S."/>
            <person name="Copeland A."/>
            <person name="Lapidus A."/>
            <person name="Glavina del Rio T."/>
            <person name="Dalin E."/>
            <person name="Tice H."/>
            <person name="Bruce D."/>
            <person name="Goodwin L."/>
            <person name="Pitluck S."/>
            <person name="Schmutz J."/>
            <person name="Larimer F."/>
            <person name="Land M."/>
            <person name="Hauser L."/>
            <person name="Kyrpides N."/>
            <person name="Ovchinnikova G."/>
            <person name="Li T."/>
            <person name="Liu Z."/>
            <person name="Zhao F."/>
            <person name="Overmann J."/>
            <person name="Bryant D.A."/>
            <person name="Richardson P."/>
        </authorList>
    </citation>
    <scope>NUCLEOTIDE SEQUENCE [LARGE SCALE GENOMIC DNA]</scope>
    <source>
        <strain>BS1</strain>
    </source>
</reference>
<sequence length="250" mass="27217">MSGHSKWATIKRKKAATDQKRGNLFTKLVREITIAAKTGGGDPGGNPRLRLAIDTAKMNSMPNDNIQRAIKKGTGELEGVTYDEITYEGYGPGGIAIIIETATDNRNRTVADVRHIINRNNGSLGENGSVSWMFQRKGRLEVPRDGVSEEQLMEVLLDAGLEDLDSEDDNCFSVITAVKDLEAAKKALDEAGIGYENAKMDMIPDTLVEPGIDDASKAIKLIEALENCDDVQAVYSNLELSEQVMNSLDS</sequence>
<proteinExistence type="inferred from homology"/>
<name>Y542_CHLPB</name>
<keyword id="KW-0963">Cytoplasm</keyword>
<keyword id="KW-0238">DNA-binding</keyword>
<keyword id="KW-0804">Transcription</keyword>
<keyword id="KW-0805">Transcription regulation</keyword>
<gene>
    <name type="ordered locus">Cphamn1_0542</name>
</gene>
<comment type="subcellular location">
    <subcellularLocation>
        <location evidence="1">Cytoplasm</location>
    </subcellularLocation>
</comment>
<comment type="similarity">
    <text evidence="1">Belongs to the TACO1 family.</text>
</comment>
<protein>
    <recommendedName>
        <fullName evidence="1">Probable transcriptional regulatory protein Cphamn1_0542</fullName>
    </recommendedName>
</protein>
<dbReference type="EMBL" id="CP001101">
    <property type="protein sequence ID" value="ACE03505.1"/>
    <property type="molecule type" value="Genomic_DNA"/>
</dbReference>
<dbReference type="SMR" id="B3EMM7"/>
<dbReference type="STRING" id="331678.Cphamn1_0542"/>
<dbReference type="KEGG" id="cpb:Cphamn1_0542"/>
<dbReference type="eggNOG" id="COG0217">
    <property type="taxonomic scope" value="Bacteria"/>
</dbReference>
<dbReference type="HOGENOM" id="CLU_062974_2_2_10"/>
<dbReference type="OrthoDB" id="9781053at2"/>
<dbReference type="GO" id="GO:0005829">
    <property type="term" value="C:cytosol"/>
    <property type="evidence" value="ECO:0007669"/>
    <property type="project" value="TreeGrafter"/>
</dbReference>
<dbReference type="GO" id="GO:0003677">
    <property type="term" value="F:DNA binding"/>
    <property type="evidence" value="ECO:0007669"/>
    <property type="project" value="UniProtKB-UniRule"/>
</dbReference>
<dbReference type="GO" id="GO:0006355">
    <property type="term" value="P:regulation of DNA-templated transcription"/>
    <property type="evidence" value="ECO:0007669"/>
    <property type="project" value="UniProtKB-UniRule"/>
</dbReference>
<dbReference type="FunFam" id="1.10.10.200:FF:000002">
    <property type="entry name" value="Probable transcriptional regulatory protein CLM62_37755"/>
    <property type="match status" value="1"/>
</dbReference>
<dbReference type="Gene3D" id="1.10.10.200">
    <property type="match status" value="1"/>
</dbReference>
<dbReference type="Gene3D" id="3.30.70.980">
    <property type="match status" value="2"/>
</dbReference>
<dbReference type="HAMAP" id="MF_00693">
    <property type="entry name" value="Transcrip_reg_TACO1"/>
    <property type="match status" value="1"/>
</dbReference>
<dbReference type="InterPro" id="IPR017856">
    <property type="entry name" value="Integrase-like_N"/>
</dbReference>
<dbReference type="InterPro" id="IPR048300">
    <property type="entry name" value="TACO1_YebC-like_2nd/3rd_dom"/>
</dbReference>
<dbReference type="InterPro" id="IPR049083">
    <property type="entry name" value="TACO1_YebC_N"/>
</dbReference>
<dbReference type="InterPro" id="IPR002876">
    <property type="entry name" value="Transcrip_reg_TACO1-like"/>
</dbReference>
<dbReference type="InterPro" id="IPR026564">
    <property type="entry name" value="Transcrip_reg_TACO1-like_dom3"/>
</dbReference>
<dbReference type="InterPro" id="IPR029072">
    <property type="entry name" value="YebC-like"/>
</dbReference>
<dbReference type="NCBIfam" id="NF001030">
    <property type="entry name" value="PRK00110.1"/>
    <property type="match status" value="1"/>
</dbReference>
<dbReference type="NCBIfam" id="NF009044">
    <property type="entry name" value="PRK12378.1"/>
    <property type="match status" value="1"/>
</dbReference>
<dbReference type="NCBIfam" id="TIGR01033">
    <property type="entry name" value="YebC/PmpR family DNA-binding transcriptional regulator"/>
    <property type="match status" value="1"/>
</dbReference>
<dbReference type="PANTHER" id="PTHR12532:SF6">
    <property type="entry name" value="TRANSCRIPTIONAL REGULATORY PROTEIN YEBC-RELATED"/>
    <property type="match status" value="1"/>
</dbReference>
<dbReference type="PANTHER" id="PTHR12532">
    <property type="entry name" value="TRANSLATIONAL ACTIVATOR OF CYTOCHROME C OXIDASE 1"/>
    <property type="match status" value="1"/>
</dbReference>
<dbReference type="Pfam" id="PF20772">
    <property type="entry name" value="TACO1_YebC_N"/>
    <property type="match status" value="1"/>
</dbReference>
<dbReference type="Pfam" id="PF01709">
    <property type="entry name" value="Transcrip_reg"/>
    <property type="match status" value="1"/>
</dbReference>
<dbReference type="SUPFAM" id="SSF75625">
    <property type="entry name" value="YebC-like"/>
    <property type="match status" value="1"/>
</dbReference>
<feature type="chain" id="PRO_1000132170" description="Probable transcriptional regulatory protein Cphamn1_0542">
    <location>
        <begin position="1"/>
        <end position="250"/>
    </location>
</feature>
<accession>B3EMM7</accession>